<sequence>METTVRKQKKNLETKKTSIYSLQLHEMQDWLKEQGEPKFRAGQIFDWLYKKRVKNYEDMSNLSKGLREKLSNSFDITTLNTLVKQTSSDGTIKFLFQLYDGYSIETVLMRHEYGNSICVTTQVGCRIGCTFCASTLGGLKRNLEAGEIVAQVVEVQRALDESEERVSSLVVMGIGEPFDNYDNLMGFLRIINHEKGLHIGARHMTVSTSGIIPKIYKFAEEDLQINFAISLHAPNSELRSKLMPINRAYKLPDLMEAIKYYVNRTGRRITFEYGLFGGENDQVEHAEELAALLKGVKCHVNLIPVNYVPERDYVRTPREQIFLFEKTLKDRGVNVTIRREQGHDIDAACGQLRAKERKEETR</sequence>
<comment type="function">
    <text evidence="1">Specifically methylates position 2 of adenine 2503 in 23S rRNA and position 2 of adenine 37 in tRNAs.</text>
</comment>
<comment type="catalytic activity">
    <reaction evidence="1">
        <text>adenosine(2503) in 23S rRNA + 2 reduced [2Fe-2S]-[ferredoxin] + 2 S-adenosyl-L-methionine = 2-methyladenosine(2503) in 23S rRNA + 5'-deoxyadenosine + L-methionine + 2 oxidized [2Fe-2S]-[ferredoxin] + S-adenosyl-L-homocysteine</text>
        <dbReference type="Rhea" id="RHEA:42916"/>
        <dbReference type="Rhea" id="RHEA-COMP:10000"/>
        <dbReference type="Rhea" id="RHEA-COMP:10001"/>
        <dbReference type="Rhea" id="RHEA-COMP:10152"/>
        <dbReference type="Rhea" id="RHEA-COMP:10282"/>
        <dbReference type="ChEBI" id="CHEBI:17319"/>
        <dbReference type="ChEBI" id="CHEBI:33737"/>
        <dbReference type="ChEBI" id="CHEBI:33738"/>
        <dbReference type="ChEBI" id="CHEBI:57844"/>
        <dbReference type="ChEBI" id="CHEBI:57856"/>
        <dbReference type="ChEBI" id="CHEBI:59789"/>
        <dbReference type="ChEBI" id="CHEBI:74411"/>
        <dbReference type="ChEBI" id="CHEBI:74497"/>
        <dbReference type="EC" id="2.1.1.192"/>
    </reaction>
</comment>
<comment type="catalytic activity">
    <reaction evidence="1">
        <text>adenosine(37) in tRNA + 2 reduced [2Fe-2S]-[ferredoxin] + 2 S-adenosyl-L-methionine = 2-methyladenosine(37) in tRNA + 5'-deoxyadenosine + L-methionine + 2 oxidized [2Fe-2S]-[ferredoxin] + S-adenosyl-L-homocysteine</text>
        <dbReference type="Rhea" id="RHEA:43332"/>
        <dbReference type="Rhea" id="RHEA-COMP:10000"/>
        <dbReference type="Rhea" id="RHEA-COMP:10001"/>
        <dbReference type="Rhea" id="RHEA-COMP:10162"/>
        <dbReference type="Rhea" id="RHEA-COMP:10485"/>
        <dbReference type="ChEBI" id="CHEBI:17319"/>
        <dbReference type="ChEBI" id="CHEBI:33737"/>
        <dbReference type="ChEBI" id="CHEBI:33738"/>
        <dbReference type="ChEBI" id="CHEBI:57844"/>
        <dbReference type="ChEBI" id="CHEBI:57856"/>
        <dbReference type="ChEBI" id="CHEBI:59789"/>
        <dbReference type="ChEBI" id="CHEBI:74411"/>
        <dbReference type="ChEBI" id="CHEBI:74497"/>
        <dbReference type="EC" id="2.1.1.192"/>
    </reaction>
</comment>
<comment type="cofactor">
    <cofactor evidence="1">
        <name>[4Fe-4S] cluster</name>
        <dbReference type="ChEBI" id="CHEBI:49883"/>
    </cofactor>
    <text evidence="1">Binds 1 [4Fe-4S] cluster. The cluster is coordinated with 3 cysteines and an exchangeable S-adenosyl-L-methionine.</text>
</comment>
<comment type="subcellular location">
    <subcellularLocation>
        <location evidence="1">Cytoplasm</location>
    </subcellularLocation>
</comment>
<comment type="miscellaneous">
    <text evidence="1">Reaction proceeds by a ping-pong mechanism involving intermediate methylation of a conserved cysteine residue.</text>
</comment>
<comment type="similarity">
    <text evidence="1">Belongs to the radical SAM superfamily. RlmN family.</text>
</comment>
<evidence type="ECO:0000255" key="1">
    <source>
        <dbReference type="HAMAP-Rule" id="MF_01849"/>
    </source>
</evidence>
<evidence type="ECO:0000255" key="2">
    <source>
        <dbReference type="PROSITE-ProRule" id="PRU01266"/>
    </source>
</evidence>
<proteinExistence type="inferred from homology"/>
<feature type="chain" id="PRO_0000350038" description="Probable dual-specificity RNA methyltransferase RlmN">
    <location>
        <begin position="1"/>
        <end position="362"/>
    </location>
</feature>
<feature type="domain" description="Radical SAM core" evidence="2">
    <location>
        <begin position="111"/>
        <end position="344"/>
    </location>
</feature>
<feature type="active site" description="Proton acceptor" evidence="1">
    <location>
        <position position="105"/>
    </location>
</feature>
<feature type="active site" description="S-methylcysteine intermediate" evidence="1">
    <location>
        <position position="349"/>
    </location>
</feature>
<feature type="binding site" evidence="1">
    <location>
        <position position="125"/>
    </location>
    <ligand>
        <name>[4Fe-4S] cluster</name>
        <dbReference type="ChEBI" id="CHEBI:49883"/>
        <note>4Fe-4S-S-AdoMet</note>
    </ligand>
</feature>
<feature type="binding site" evidence="1">
    <location>
        <position position="129"/>
    </location>
    <ligand>
        <name>[4Fe-4S] cluster</name>
        <dbReference type="ChEBI" id="CHEBI:49883"/>
        <note>4Fe-4S-S-AdoMet</note>
    </ligand>
</feature>
<feature type="binding site" evidence="1">
    <location>
        <position position="132"/>
    </location>
    <ligand>
        <name>[4Fe-4S] cluster</name>
        <dbReference type="ChEBI" id="CHEBI:49883"/>
        <note>4Fe-4S-S-AdoMet</note>
    </ligand>
</feature>
<feature type="binding site" evidence="1">
    <location>
        <begin position="175"/>
        <end position="176"/>
    </location>
    <ligand>
        <name>S-adenosyl-L-methionine</name>
        <dbReference type="ChEBI" id="CHEBI:59789"/>
    </ligand>
</feature>
<feature type="binding site" evidence="1">
    <location>
        <position position="207"/>
    </location>
    <ligand>
        <name>S-adenosyl-L-methionine</name>
        <dbReference type="ChEBI" id="CHEBI:59789"/>
    </ligand>
</feature>
<feature type="binding site" evidence="1">
    <location>
        <begin position="230"/>
        <end position="232"/>
    </location>
    <ligand>
        <name>S-adenosyl-L-methionine</name>
        <dbReference type="ChEBI" id="CHEBI:59789"/>
    </ligand>
</feature>
<feature type="binding site" evidence="1">
    <location>
        <position position="306"/>
    </location>
    <ligand>
        <name>S-adenosyl-L-methionine</name>
        <dbReference type="ChEBI" id="CHEBI:59789"/>
    </ligand>
</feature>
<feature type="disulfide bond" description="(transient)" evidence="1">
    <location>
        <begin position="118"/>
        <end position="349"/>
    </location>
</feature>
<accession>Q6HEV1</accession>
<gene>
    <name evidence="1" type="primary">rlmN</name>
    <name type="ordered locus">BT9727_3605</name>
</gene>
<keyword id="KW-0004">4Fe-4S</keyword>
<keyword id="KW-0963">Cytoplasm</keyword>
<keyword id="KW-1015">Disulfide bond</keyword>
<keyword id="KW-0408">Iron</keyword>
<keyword id="KW-0411">Iron-sulfur</keyword>
<keyword id="KW-0479">Metal-binding</keyword>
<keyword id="KW-0489">Methyltransferase</keyword>
<keyword id="KW-0698">rRNA processing</keyword>
<keyword id="KW-0949">S-adenosyl-L-methionine</keyword>
<keyword id="KW-0808">Transferase</keyword>
<keyword id="KW-0819">tRNA processing</keyword>
<dbReference type="EC" id="2.1.1.192" evidence="1"/>
<dbReference type="EMBL" id="AE017355">
    <property type="protein sequence ID" value="AAT63823.1"/>
    <property type="molecule type" value="Genomic_DNA"/>
</dbReference>
<dbReference type="RefSeq" id="WP_000450546.1">
    <property type="nucleotide sequence ID" value="NC_005957.1"/>
</dbReference>
<dbReference type="RefSeq" id="YP_037925.1">
    <property type="nucleotide sequence ID" value="NC_005957.1"/>
</dbReference>
<dbReference type="SMR" id="Q6HEV1"/>
<dbReference type="KEGG" id="btk:BT9727_3605"/>
<dbReference type="PATRIC" id="fig|281309.8.peg.3843"/>
<dbReference type="HOGENOM" id="CLU_029101_0_1_9"/>
<dbReference type="Proteomes" id="UP000001301">
    <property type="component" value="Chromosome"/>
</dbReference>
<dbReference type="GO" id="GO:0005737">
    <property type="term" value="C:cytoplasm"/>
    <property type="evidence" value="ECO:0007669"/>
    <property type="project" value="UniProtKB-SubCell"/>
</dbReference>
<dbReference type="GO" id="GO:0051539">
    <property type="term" value="F:4 iron, 4 sulfur cluster binding"/>
    <property type="evidence" value="ECO:0007669"/>
    <property type="project" value="UniProtKB-UniRule"/>
</dbReference>
<dbReference type="GO" id="GO:0046872">
    <property type="term" value="F:metal ion binding"/>
    <property type="evidence" value="ECO:0007669"/>
    <property type="project" value="UniProtKB-KW"/>
</dbReference>
<dbReference type="GO" id="GO:0070040">
    <property type="term" value="F:rRNA (adenine(2503)-C2-)-methyltransferase activity"/>
    <property type="evidence" value="ECO:0007669"/>
    <property type="project" value="UniProtKB-UniRule"/>
</dbReference>
<dbReference type="GO" id="GO:0019843">
    <property type="term" value="F:rRNA binding"/>
    <property type="evidence" value="ECO:0007669"/>
    <property type="project" value="UniProtKB-UniRule"/>
</dbReference>
<dbReference type="GO" id="GO:0002935">
    <property type="term" value="F:tRNA (adenine(37)-C2)-methyltransferase activity"/>
    <property type="evidence" value="ECO:0007669"/>
    <property type="project" value="UniProtKB-UniRule"/>
</dbReference>
<dbReference type="GO" id="GO:0000049">
    <property type="term" value="F:tRNA binding"/>
    <property type="evidence" value="ECO:0007669"/>
    <property type="project" value="UniProtKB-UniRule"/>
</dbReference>
<dbReference type="GO" id="GO:0070475">
    <property type="term" value="P:rRNA base methylation"/>
    <property type="evidence" value="ECO:0007669"/>
    <property type="project" value="UniProtKB-UniRule"/>
</dbReference>
<dbReference type="GO" id="GO:0030488">
    <property type="term" value="P:tRNA methylation"/>
    <property type="evidence" value="ECO:0007669"/>
    <property type="project" value="UniProtKB-UniRule"/>
</dbReference>
<dbReference type="CDD" id="cd01335">
    <property type="entry name" value="Radical_SAM"/>
    <property type="match status" value="1"/>
</dbReference>
<dbReference type="FunFam" id="1.10.150.530:FF:000002">
    <property type="entry name" value="Probable dual-specificity RNA methyltransferase RlmN"/>
    <property type="match status" value="1"/>
</dbReference>
<dbReference type="FunFam" id="3.20.20.70:FF:000014">
    <property type="entry name" value="Probable dual-specificity RNA methyltransferase RlmN"/>
    <property type="match status" value="1"/>
</dbReference>
<dbReference type="Gene3D" id="1.10.150.530">
    <property type="match status" value="1"/>
</dbReference>
<dbReference type="Gene3D" id="3.20.20.70">
    <property type="entry name" value="Aldolase class I"/>
    <property type="match status" value="1"/>
</dbReference>
<dbReference type="HAMAP" id="MF_01849">
    <property type="entry name" value="RNA_methyltr_RlmN"/>
    <property type="match status" value="1"/>
</dbReference>
<dbReference type="InterPro" id="IPR013785">
    <property type="entry name" value="Aldolase_TIM"/>
</dbReference>
<dbReference type="InterPro" id="IPR040072">
    <property type="entry name" value="Methyltransferase_A"/>
</dbReference>
<dbReference type="InterPro" id="IPR048641">
    <property type="entry name" value="RlmN_N"/>
</dbReference>
<dbReference type="InterPro" id="IPR027492">
    <property type="entry name" value="RNA_MTrfase_RlmN"/>
</dbReference>
<dbReference type="InterPro" id="IPR004383">
    <property type="entry name" value="rRNA_lsu_MTrfase_RlmN/Cfr"/>
</dbReference>
<dbReference type="InterPro" id="IPR007197">
    <property type="entry name" value="rSAM"/>
</dbReference>
<dbReference type="NCBIfam" id="TIGR00048">
    <property type="entry name" value="rRNA_mod_RlmN"/>
    <property type="match status" value="1"/>
</dbReference>
<dbReference type="PANTHER" id="PTHR30544">
    <property type="entry name" value="23S RRNA METHYLTRANSFERASE"/>
    <property type="match status" value="1"/>
</dbReference>
<dbReference type="PANTHER" id="PTHR30544:SF5">
    <property type="entry name" value="RADICAL SAM CORE DOMAIN-CONTAINING PROTEIN"/>
    <property type="match status" value="1"/>
</dbReference>
<dbReference type="Pfam" id="PF04055">
    <property type="entry name" value="Radical_SAM"/>
    <property type="match status" value="1"/>
</dbReference>
<dbReference type="Pfam" id="PF21016">
    <property type="entry name" value="RlmN_N"/>
    <property type="match status" value="1"/>
</dbReference>
<dbReference type="PIRSF" id="PIRSF006004">
    <property type="entry name" value="CHP00048"/>
    <property type="match status" value="1"/>
</dbReference>
<dbReference type="SFLD" id="SFLDF00275">
    <property type="entry name" value="adenosine_C2_methyltransferase"/>
    <property type="match status" value="1"/>
</dbReference>
<dbReference type="SFLD" id="SFLDS00029">
    <property type="entry name" value="Radical_SAM"/>
    <property type="match status" value="1"/>
</dbReference>
<dbReference type="SUPFAM" id="SSF102114">
    <property type="entry name" value="Radical SAM enzymes"/>
    <property type="match status" value="1"/>
</dbReference>
<dbReference type="PROSITE" id="PS51918">
    <property type="entry name" value="RADICAL_SAM"/>
    <property type="match status" value="1"/>
</dbReference>
<reference key="1">
    <citation type="journal article" date="2006" name="J. Bacteriol.">
        <title>Pathogenomic sequence analysis of Bacillus cereus and Bacillus thuringiensis isolates closely related to Bacillus anthracis.</title>
        <authorList>
            <person name="Han C.S."/>
            <person name="Xie G."/>
            <person name="Challacombe J.F."/>
            <person name="Altherr M.R."/>
            <person name="Bhotika S.S."/>
            <person name="Bruce D."/>
            <person name="Campbell C.S."/>
            <person name="Campbell M.L."/>
            <person name="Chen J."/>
            <person name="Chertkov O."/>
            <person name="Cleland C."/>
            <person name="Dimitrijevic M."/>
            <person name="Doggett N.A."/>
            <person name="Fawcett J.J."/>
            <person name="Glavina T."/>
            <person name="Goodwin L.A."/>
            <person name="Hill K.K."/>
            <person name="Hitchcock P."/>
            <person name="Jackson P.J."/>
            <person name="Keim P."/>
            <person name="Kewalramani A.R."/>
            <person name="Longmire J."/>
            <person name="Lucas S."/>
            <person name="Malfatti S."/>
            <person name="McMurry K."/>
            <person name="Meincke L.J."/>
            <person name="Misra M."/>
            <person name="Moseman B.L."/>
            <person name="Mundt M."/>
            <person name="Munk A.C."/>
            <person name="Okinaka R.T."/>
            <person name="Parson-Quintana B."/>
            <person name="Reilly L.P."/>
            <person name="Richardson P."/>
            <person name="Robinson D.L."/>
            <person name="Rubin E."/>
            <person name="Saunders E."/>
            <person name="Tapia R."/>
            <person name="Tesmer J.G."/>
            <person name="Thayer N."/>
            <person name="Thompson L.S."/>
            <person name="Tice H."/>
            <person name="Ticknor L.O."/>
            <person name="Wills P.L."/>
            <person name="Brettin T.S."/>
            <person name="Gilna P."/>
        </authorList>
    </citation>
    <scope>NUCLEOTIDE SEQUENCE [LARGE SCALE GENOMIC DNA]</scope>
    <source>
        <strain>97-27</strain>
    </source>
</reference>
<protein>
    <recommendedName>
        <fullName evidence="1">Probable dual-specificity RNA methyltransferase RlmN</fullName>
        <ecNumber evidence="1">2.1.1.192</ecNumber>
    </recommendedName>
    <alternativeName>
        <fullName evidence="1">23S rRNA (adenine(2503)-C(2))-methyltransferase</fullName>
    </alternativeName>
    <alternativeName>
        <fullName evidence="1">23S rRNA m2A2503 methyltransferase</fullName>
    </alternativeName>
    <alternativeName>
        <fullName evidence="1">Ribosomal RNA large subunit methyltransferase N</fullName>
    </alternativeName>
    <alternativeName>
        <fullName evidence="1">tRNA (adenine(37)-C(2))-methyltransferase</fullName>
    </alternativeName>
    <alternativeName>
        <fullName evidence="1">tRNA m2A37 methyltransferase</fullName>
    </alternativeName>
</protein>
<organism>
    <name type="scientific">Bacillus thuringiensis subsp. konkukian (strain 97-27)</name>
    <dbReference type="NCBI Taxonomy" id="281309"/>
    <lineage>
        <taxon>Bacteria</taxon>
        <taxon>Bacillati</taxon>
        <taxon>Bacillota</taxon>
        <taxon>Bacilli</taxon>
        <taxon>Bacillales</taxon>
        <taxon>Bacillaceae</taxon>
        <taxon>Bacillus</taxon>
        <taxon>Bacillus cereus group</taxon>
    </lineage>
</organism>
<name>RLMN_BACHK</name>